<accession>C4XLY5</accession>
<feature type="chain" id="PRO_1000214625" description="Large ribosomal subunit protein uL5">
    <location>
        <begin position="1"/>
        <end position="179"/>
    </location>
</feature>
<dbReference type="EMBL" id="AP010904">
    <property type="protein sequence ID" value="BAH74723.1"/>
    <property type="molecule type" value="Genomic_DNA"/>
</dbReference>
<dbReference type="RefSeq" id="WP_006920479.1">
    <property type="nucleotide sequence ID" value="NC_012796.1"/>
</dbReference>
<dbReference type="SMR" id="C4XLY5"/>
<dbReference type="STRING" id="573370.DMR_12320"/>
<dbReference type="KEGG" id="dma:DMR_12320"/>
<dbReference type="eggNOG" id="COG0094">
    <property type="taxonomic scope" value="Bacteria"/>
</dbReference>
<dbReference type="HOGENOM" id="CLU_061015_2_1_7"/>
<dbReference type="OrthoDB" id="9806626at2"/>
<dbReference type="Proteomes" id="UP000009071">
    <property type="component" value="Chromosome"/>
</dbReference>
<dbReference type="GO" id="GO:1990904">
    <property type="term" value="C:ribonucleoprotein complex"/>
    <property type="evidence" value="ECO:0007669"/>
    <property type="project" value="UniProtKB-KW"/>
</dbReference>
<dbReference type="GO" id="GO:0005840">
    <property type="term" value="C:ribosome"/>
    <property type="evidence" value="ECO:0007669"/>
    <property type="project" value="UniProtKB-KW"/>
</dbReference>
<dbReference type="GO" id="GO:0019843">
    <property type="term" value="F:rRNA binding"/>
    <property type="evidence" value="ECO:0007669"/>
    <property type="project" value="UniProtKB-UniRule"/>
</dbReference>
<dbReference type="GO" id="GO:0003735">
    <property type="term" value="F:structural constituent of ribosome"/>
    <property type="evidence" value="ECO:0007669"/>
    <property type="project" value="InterPro"/>
</dbReference>
<dbReference type="GO" id="GO:0000049">
    <property type="term" value="F:tRNA binding"/>
    <property type="evidence" value="ECO:0007669"/>
    <property type="project" value="UniProtKB-UniRule"/>
</dbReference>
<dbReference type="GO" id="GO:0006412">
    <property type="term" value="P:translation"/>
    <property type="evidence" value="ECO:0007669"/>
    <property type="project" value="UniProtKB-UniRule"/>
</dbReference>
<dbReference type="FunFam" id="3.30.1440.10:FF:000001">
    <property type="entry name" value="50S ribosomal protein L5"/>
    <property type="match status" value="1"/>
</dbReference>
<dbReference type="Gene3D" id="3.30.1440.10">
    <property type="match status" value="1"/>
</dbReference>
<dbReference type="HAMAP" id="MF_01333_B">
    <property type="entry name" value="Ribosomal_uL5_B"/>
    <property type="match status" value="1"/>
</dbReference>
<dbReference type="InterPro" id="IPR002132">
    <property type="entry name" value="Ribosomal_uL5"/>
</dbReference>
<dbReference type="InterPro" id="IPR020930">
    <property type="entry name" value="Ribosomal_uL5_bac-type"/>
</dbReference>
<dbReference type="InterPro" id="IPR031309">
    <property type="entry name" value="Ribosomal_uL5_C"/>
</dbReference>
<dbReference type="InterPro" id="IPR020929">
    <property type="entry name" value="Ribosomal_uL5_CS"/>
</dbReference>
<dbReference type="InterPro" id="IPR022803">
    <property type="entry name" value="Ribosomal_uL5_dom_sf"/>
</dbReference>
<dbReference type="InterPro" id="IPR031310">
    <property type="entry name" value="Ribosomal_uL5_N"/>
</dbReference>
<dbReference type="NCBIfam" id="NF000585">
    <property type="entry name" value="PRK00010.1"/>
    <property type="match status" value="1"/>
</dbReference>
<dbReference type="PANTHER" id="PTHR11994">
    <property type="entry name" value="60S RIBOSOMAL PROTEIN L11-RELATED"/>
    <property type="match status" value="1"/>
</dbReference>
<dbReference type="Pfam" id="PF00281">
    <property type="entry name" value="Ribosomal_L5"/>
    <property type="match status" value="1"/>
</dbReference>
<dbReference type="Pfam" id="PF00673">
    <property type="entry name" value="Ribosomal_L5_C"/>
    <property type="match status" value="1"/>
</dbReference>
<dbReference type="PIRSF" id="PIRSF002161">
    <property type="entry name" value="Ribosomal_L5"/>
    <property type="match status" value="1"/>
</dbReference>
<dbReference type="SUPFAM" id="SSF55282">
    <property type="entry name" value="RL5-like"/>
    <property type="match status" value="1"/>
</dbReference>
<dbReference type="PROSITE" id="PS00358">
    <property type="entry name" value="RIBOSOMAL_L5"/>
    <property type="match status" value="1"/>
</dbReference>
<keyword id="KW-0687">Ribonucleoprotein</keyword>
<keyword id="KW-0689">Ribosomal protein</keyword>
<keyword id="KW-0694">RNA-binding</keyword>
<keyword id="KW-0699">rRNA-binding</keyword>
<keyword id="KW-0820">tRNA-binding</keyword>
<reference key="1">
    <citation type="journal article" date="2009" name="Genome Res.">
        <title>Whole genome sequence of Desulfovibrio magneticus strain RS-1 revealed common gene clusters in magnetotactic bacteria.</title>
        <authorList>
            <person name="Nakazawa H."/>
            <person name="Arakaki A."/>
            <person name="Narita-Yamada S."/>
            <person name="Yashiro I."/>
            <person name="Jinno K."/>
            <person name="Aoki N."/>
            <person name="Tsuruyama A."/>
            <person name="Okamura Y."/>
            <person name="Tanikawa S."/>
            <person name="Fujita N."/>
            <person name="Takeyama H."/>
            <person name="Matsunaga T."/>
        </authorList>
    </citation>
    <scope>NUCLEOTIDE SEQUENCE [LARGE SCALE GENOMIC DNA]</scope>
    <source>
        <strain>ATCC 700980 / DSM 13731 / RS-1</strain>
    </source>
</reference>
<evidence type="ECO:0000255" key="1">
    <source>
        <dbReference type="HAMAP-Rule" id="MF_01333"/>
    </source>
</evidence>
<evidence type="ECO:0000305" key="2"/>
<protein>
    <recommendedName>
        <fullName evidence="1">Large ribosomal subunit protein uL5</fullName>
    </recommendedName>
    <alternativeName>
        <fullName evidence="2">50S ribosomal protein L5</fullName>
    </alternativeName>
</protein>
<comment type="function">
    <text evidence="1">This is one of the proteins that bind and probably mediate the attachment of the 5S RNA into the large ribosomal subunit, where it forms part of the central protuberance. In the 70S ribosome it contacts protein S13 of the 30S subunit (bridge B1b), connecting the 2 subunits; this bridge is implicated in subunit movement. Contacts the P site tRNA; the 5S rRNA and some of its associated proteins might help stabilize positioning of ribosome-bound tRNAs.</text>
</comment>
<comment type="subunit">
    <text evidence="1">Part of the 50S ribosomal subunit; part of the 5S rRNA/L5/L18/L25 subcomplex. Contacts the 5S rRNA and the P site tRNA. Forms a bridge to the 30S subunit in the 70S ribosome.</text>
</comment>
<comment type="similarity">
    <text evidence="1">Belongs to the universal ribosomal protein uL5 family.</text>
</comment>
<name>RL5_SOLM1</name>
<organism>
    <name type="scientific">Solidesulfovibrio magneticus (strain ATCC 700980 / DSM 13731 / RS-1)</name>
    <name type="common">Desulfovibrio magneticus</name>
    <dbReference type="NCBI Taxonomy" id="573370"/>
    <lineage>
        <taxon>Bacteria</taxon>
        <taxon>Pseudomonadati</taxon>
        <taxon>Thermodesulfobacteriota</taxon>
        <taxon>Desulfovibrionia</taxon>
        <taxon>Desulfovibrionales</taxon>
        <taxon>Desulfovibrionaceae</taxon>
        <taxon>Solidesulfovibrio</taxon>
    </lineage>
</organism>
<proteinExistence type="inferred from homology"/>
<gene>
    <name evidence="1" type="primary">rplE</name>
    <name type="ordered locus">DMR_12320</name>
</gene>
<sequence length="179" mass="20220">MTRLEQIYAEKVAPELKKEFGYTSSMQIPRLSFVSLNMGLGEASNNNKLIEEAVVELTAIAGQKAVITRARKSIAAFKLREGMPVGCRVTLRRDRMWDYLDKLMNFALPRVRDFRGVPDRGFDGRGNFTLGIREHSIFPEINVDRVEHVKGMNVTIVTTATADKEGKMLLDLLGMPFKK</sequence>